<name>SYDND_PROMP</name>
<keyword id="KW-0030">Aminoacyl-tRNA synthetase</keyword>
<keyword id="KW-0067">ATP-binding</keyword>
<keyword id="KW-0963">Cytoplasm</keyword>
<keyword id="KW-0436">Ligase</keyword>
<keyword id="KW-0547">Nucleotide-binding</keyword>
<keyword id="KW-0648">Protein biosynthesis</keyword>
<proteinExistence type="inferred from homology"/>
<reference key="1">
    <citation type="journal article" date="2003" name="Nature">
        <title>Genome divergence in two Prochlorococcus ecotypes reflects oceanic niche differentiation.</title>
        <authorList>
            <person name="Rocap G."/>
            <person name="Larimer F.W."/>
            <person name="Lamerdin J.E."/>
            <person name="Malfatti S."/>
            <person name="Chain P."/>
            <person name="Ahlgren N.A."/>
            <person name="Arellano A."/>
            <person name="Coleman M."/>
            <person name="Hauser L."/>
            <person name="Hess W.R."/>
            <person name="Johnson Z.I."/>
            <person name="Land M.L."/>
            <person name="Lindell D."/>
            <person name="Post A.F."/>
            <person name="Regala W."/>
            <person name="Shah M."/>
            <person name="Shaw S.L."/>
            <person name="Steglich C."/>
            <person name="Sullivan M.B."/>
            <person name="Ting C.S."/>
            <person name="Tolonen A."/>
            <person name="Webb E.A."/>
            <person name="Zinser E.R."/>
            <person name="Chisholm S.W."/>
        </authorList>
    </citation>
    <scope>NUCLEOTIDE SEQUENCE [LARGE SCALE GENOMIC DNA]</scope>
    <source>
        <strain>CCMP1986 / NIES-2087 / MED4</strain>
    </source>
</reference>
<accession>Q7UZH8</accession>
<organism>
    <name type="scientific">Prochlorococcus marinus subsp. pastoris (strain CCMP1986 / NIES-2087 / MED4)</name>
    <dbReference type="NCBI Taxonomy" id="59919"/>
    <lineage>
        <taxon>Bacteria</taxon>
        <taxon>Bacillati</taxon>
        <taxon>Cyanobacteriota</taxon>
        <taxon>Cyanophyceae</taxon>
        <taxon>Synechococcales</taxon>
        <taxon>Prochlorococcaceae</taxon>
        <taxon>Prochlorococcus</taxon>
    </lineage>
</organism>
<dbReference type="EC" id="6.1.1.23" evidence="1"/>
<dbReference type="EMBL" id="BX548174">
    <property type="protein sequence ID" value="CAE20147.1"/>
    <property type="molecule type" value="Genomic_DNA"/>
</dbReference>
<dbReference type="RefSeq" id="WP_011133315.1">
    <property type="nucleotide sequence ID" value="NC_005072.1"/>
</dbReference>
<dbReference type="SMR" id="Q7UZH8"/>
<dbReference type="STRING" id="59919.PMM1688"/>
<dbReference type="KEGG" id="pmm:PMM1688"/>
<dbReference type="eggNOG" id="COG0173">
    <property type="taxonomic scope" value="Bacteria"/>
</dbReference>
<dbReference type="HOGENOM" id="CLU_014330_3_2_3"/>
<dbReference type="OrthoDB" id="9802326at2"/>
<dbReference type="Proteomes" id="UP000001026">
    <property type="component" value="Chromosome"/>
</dbReference>
<dbReference type="GO" id="GO:0005737">
    <property type="term" value="C:cytoplasm"/>
    <property type="evidence" value="ECO:0007669"/>
    <property type="project" value="UniProtKB-SubCell"/>
</dbReference>
<dbReference type="GO" id="GO:0004815">
    <property type="term" value="F:aspartate-tRNA ligase activity"/>
    <property type="evidence" value="ECO:0007669"/>
    <property type="project" value="UniProtKB-UniRule"/>
</dbReference>
<dbReference type="GO" id="GO:0050560">
    <property type="term" value="F:aspartate-tRNA(Asn) ligase activity"/>
    <property type="evidence" value="ECO:0007669"/>
    <property type="project" value="UniProtKB-EC"/>
</dbReference>
<dbReference type="GO" id="GO:0005524">
    <property type="term" value="F:ATP binding"/>
    <property type="evidence" value="ECO:0007669"/>
    <property type="project" value="UniProtKB-UniRule"/>
</dbReference>
<dbReference type="GO" id="GO:0003676">
    <property type="term" value="F:nucleic acid binding"/>
    <property type="evidence" value="ECO:0007669"/>
    <property type="project" value="InterPro"/>
</dbReference>
<dbReference type="GO" id="GO:0006422">
    <property type="term" value="P:aspartyl-tRNA aminoacylation"/>
    <property type="evidence" value="ECO:0007669"/>
    <property type="project" value="UniProtKB-UniRule"/>
</dbReference>
<dbReference type="CDD" id="cd00777">
    <property type="entry name" value="AspRS_core"/>
    <property type="match status" value="1"/>
</dbReference>
<dbReference type="CDD" id="cd04317">
    <property type="entry name" value="EcAspRS_like_N"/>
    <property type="match status" value="1"/>
</dbReference>
<dbReference type="Gene3D" id="3.30.930.10">
    <property type="entry name" value="Bira Bifunctional Protein, Domain 2"/>
    <property type="match status" value="1"/>
</dbReference>
<dbReference type="Gene3D" id="3.30.1360.30">
    <property type="entry name" value="GAD-like domain"/>
    <property type="match status" value="1"/>
</dbReference>
<dbReference type="Gene3D" id="2.40.50.140">
    <property type="entry name" value="Nucleic acid-binding proteins"/>
    <property type="match status" value="1"/>
</dbReference>
<dbReference type="HAMAP" id="MF_00044">
    <property type="entry name" value="Asp_tRNA_synth_type1"/>
    <property type="match status" value="1"/>
</dbReference>
<dbReference type="InterPro" id="IPR004364">
    <property type="entry name" value="Aa-tRNA-synt_II"/>
</dbReference>
<dbReference type="InterPro" id="IPR006195">
    <property type="entry name" value="aa-tRNA-synth_II"/>
</dbReference>
<dbReference type="InterPro" id="IPR045864">
    <property type="entry name" value="aa-tRNA-synth_II/BPL/LPL"/>
</dbReference>
<dbReference type="InterPro" id="IPR004524">
    <property type="entry name" value="Asp-tRNA-ligase_1"/>
</dbReference>
<dbReference type="InterPro" id="IPR047089">
    <property type="entry name" value="Asp-tRNA-ligase_1_N"/>
</dbReference>
<dbReference type="InterPro" id="IPR002312">
    <property type="entry name" value="Asp/Asn-tRNA-synth_IIb"/>
</dbReference>
<dbReference type="InterPro" id="IPR047090">
    <property type="entry name" value="AspRS_core"/>
</dbReference>
<dbReference type="InterPro" id="IPR004115">
    <property type="entry name" value="GAD-like_sf"/>
</dbReference>
<dbReference type="InterPro" id="IPR029351">
    <property type="entry name" value="GAD_dom"/>
</dbReference>
<dbReference type="InterPro" id="IPR012340">
    <property type="entry name" value="NA-bd_OB-fold"/>
</dbReference>
<dbReference type="InterPro" id="IPR004365">
    <property type="entry name" value="NA-bd_OB_tRNA"/>
</dbReference>
<dbReference type="NCBIfam" id="TIGR00459">
    <property type="entry name" value="aspS_bact"/>
    <property type="match status" value="1"/>
</dbReference>
<dbReference type="NCBIfam" id="NF001750">
    <property type="entry name" value="PRK00476.1"/>
    <property type="match status" value="1"/>
</dbReference>
<dbReference type="PANTHER" id="PTHR22594:SF5">
    <property type="entry name" value="ASPARTATE--TRNA LIGASE, MITOCHONDRIAL"/>
    <property type="match status" value="1"/>
</dbReference>
<dbReference type="PANTHER" id="PTHR22594">
    <property type="entry name" value="ASPARTYL/LYSYL-TRNA SYNTHETASE"/>
    <property type="match status" value="1"/>
</dbReference>
<dbReference type="Pfam" id="PF02938">
    <property type="entry name" value="GAD"/>
    <property type="match status" value="1"/>
</dbReference>
<dbReference type="Pfam" id="PF00152">
    <property type="entry name" value="tRNA-synt_2"/>
    <property type="match status" value="1"/>
</dbReference>
<dbReference type="Pfam" id="PF01336">
    <property type="entry name" value="tRNA_anti-codon"/>
    <property type="match status" value="1"/>
</dbReference>
<dbReference type="PRINTS" id="PR01042">
    <property type="entry name" value="TRNASYNTHASP"/>
</dbReference>
<dbReference type="SUPFAM" id="SSF55681">
    <property type="entry name" value="Class II aaRS and biotin synthetases"/>
    <property type="match status" value="1"/>
</dbReference>
<dbReference type="SUPFAM" id="SSF55261">
    <property type="entry name" value="GAD domain-like"/>
    <property type="match status" value="1"/>
</dbReference>
<dbReference type="SUPFAM" id="SSF50249">
    <property type="entry name" value="Nucleic acid-binding proteins"/>
    <property type="match status" value="1"/>
</dbReference>
<dbReference type="PROSITE" id="PS50862">
    <property type="entry name" value="AA_TRNA_LIGASE_II"/>
    <property type="match status" value="1"/>
</dbReference>
<feature type="chain" id="PRO_0000110923" description="Aspartate--tRNA(Asp/Asn) ligase">
    <location>
        <begin position="1"/>
        <end position="598"/>
    </location>
</feature>
<feature type="region of interest" description="Aspartate" evidence="1">
    <location>
        <begin position="201"/>
        <end position="204"/>
    </location>
</feature>
<feature type="binding site" evidence="1">
    <location>
        <position position="177"/>
    </location>
    <ligand>
        <name>L-aspartate</name>
        <dbReference type="ChEBI" id="CHEBI:29991"/>
    </ligand>
</feature>
<feature type="binding site" evidence="1">
    <location>
        <begin position="223"/>
        <end position="225"/>
    </location>
    <ligand>
        <name>ATP</name>
        <dbReference type="ChEBI" id="CHEBI:30616"/>
    </ligand>
</feature>
<feature type="binding site" evidence="1">
    <location>
        <position position="223"/>
    </location>
    <ligand>
        <name>L-aspartate</name>
        <dbReference type="ChEBI" id="CHEBI:29991"/>
    </ligand>
</feature>
<feature type="binding site" evidence="1">
    <location>
        <position position="232"/>
    </location>
    <ligand>
        <name>ATP</name>
        <dbReference type="ChEBI" id="CHEBI:30616"/>
    </ligand>
</feature>
<feature type="binding site" evidence="1">
    <location>
        <position position="456"/>
    </location>
    <ligand>
        <name>L-aspartate</name>
        <dbReference type="ChEBI" id="CHEBI:29991"/>
    </ligand>
</feature>
<feature type="binding site" evidence="1">
    <location>
        <position position="493"/>
    </location>
    <ligand>
        <name>ATP</name>
        <dbReference type="ChEBI" id="CHEBI:30616"/>
    </ligand>
</feature>
<feature type="binding site" evidence="1">
    <location>
        <position position="500"/>
    </location>
    <ligand>
        <name>L-aspartate</name>
        <dbReference type="ChEBI" id="CHEBI:29991"/>
    </ligand>
</feature>
<feature type="binding site" evidence="1">
    <location>
        <begin position="545"/>
        <end position="548"/>
    </location>
    <ligand>
        <name>ATP</name>
        <dbReference type="ChEBI" id="CHEBI:30616"/>
    </ligand>
</feature>
<feature type="site" description="Important for tRNA non-discrimination" evidence="1">
    <location>
        <position position="30"/>
    </location>
</feature>
<comment type="function">
    <text evidence="1">Aspartyl-tRNA synthetase with relaxed tRNA specificity since it is able to aspartylate not only its cognate tRNA(Asp) but also tRNA(Asn). Reaction proceeds in two steps: L-aspartate is first activated by ATP to form Asp-AMP and then transferred to the acceptor end of tRNA(Asp/Asn).</text>
</comment>
<comment type="catalytic activity">
    <reaction evidence="1">
        <text>tRNA(Asx) + L-aspartate + ATP = L-aspartyl-tRNA(Asx) + AMP + diphosphate</text>
        <dbReference type="Rhea" id="RHEA:18349"/>
        <dbReference type="Rhea" id="RHEA-COMP:9710"/>
        <dbReference type="Rhea" id="RHEA-COMP:9711"/>
        <dbReference type="ChEBI" id="CHEBI:29991"/>
        <dbReference type="ChEBI" id="CHEBI:30616"/>
        <dbReference type="ChEBI" id="CHEBI:33019"/>
        <dbReference type="ChEBI" id="CHEBI:78442"/>
        <dbReference type="ChEBI" id="CHEBI:78516"/>
        <dbReference type="ChEBI" id="CHEBI:456215"/>
        <dbReference type="EC" id="6.1.1.23"/>
    </reaction>
</comment>
<comment type="subunit">
    <text evidence="1">Homodimer.</text>
</comment>
<comment type="subcellular location">
    <subcellularLocation>
        <location evidence="1">Cytoplasm</location>
    </subcellularLocation>
</comment>
<comment type="similarity">
    <text evidence="1">Belongs to the class-II aminoacyl-tRNA synthetase family. Type 1 subfamily.</text>
</comment>
<protein>
    <recommendedName>
        <fullName evidence="1">Aspartate--tRNA(Asp/Asn) ligase</fullName>
        <ecNumber evidence="1">6.1.1.23</ecNumber>
    </recommendedName>
    <alternativeName>
        <fullName evidence="1">Aspartyl-tRNA synthetase</fullName>
        <shortName evidence="1">AspRS</shortName>
    </alternativeName>
    <alternativeName>
        <fullName evidence="1">Non-discriminating aspartyl-tRNA synthetase</fullName>
        <shortName evidence="1">ND-AspRS</shortName>
    </alternativeName>
</protein>
<gene>
    <name evidence="1" type="primary">aspS</name>
    <name type="ordered locus">PMM1688</name>
</gene>
<sequence>MRNKICEELNKSDIGKVVNLCGWVDRRRDHGGVIFIDLRDHSGFMQITINPEDGETLFKQAEILRNETVIMVNGIVNERPKDSINKNILTGELELKVKDLQILNQIKNNLPFPISVHDYENTKEELRLKYRYLDLRRGKLLKNLKTRHKIIKAVREYLDNSGFTEVETPLLTKSTPEGARDFLVPARLSNGEFFALPQSPQLFKQLLMVGGLDKYYQIAKCFRDEDLRADRQPEFTQLDIEMSFISEEEIISFNEKLIKNVWKNVLNINFNEEFPRMTWQEAMDNYGTDRPDTRYEMLLKNLGGILGNIGFNIFTKAIQNGGAIKSITIKDGNTSISNVRIKPGGDIFKVAQDAGAGGLAFIRVKGDELETIGAIKNNLNKDHISTILKITEAKDGDLILLGAGNTQIVNQSLDRVRQYIAKDLKLIEKDKWNFLWVTDFPMFEMNEEEKRFEALHHPFCSPKNIKLEDSKELKEKIESSTAHAYDLVLNGLELGGGSLRIHQAEMQREVLRTVGLTDNQINEKFGFLIEALEMGAPPHGGIAFGVDRITMLILGEDSIRETIAFPKNQQAKCLLTNAPSNVSKSQLKELDIEITIDE</sequence>
<evidence type="ECO:0000255" key="1">
    <source>
        <dbReference type="HAMAP-Rule" id="MF_00044"/>
    </source>
</evidence>